<protein>
    <recommendedName>
        <fullName>Chitinase-like protein Idgf3</fullName>
    </recommendedName>
    <alternativeName>
        <fullName>Imaginal disk growth factor protein 3</fullName>
    </alternativeName>
</protein>
<feature type="signal peptide" evidence="1">
    <location>
        <begin position="1"/>
        <end position="23"/>
    </location>
</feature>
<feature type="chain" id="PRO_0000011986" description="Chitinase-like protein Idgf3">
    <location>
        <begin position="24"/>
        <end position="441"/>
    </location>
</feature>
<feature type="domain" description="GH18" evidence="2">
    <location>
        <begin position="25"/>
        <end position="441"/>
    </location>
</feature>
<feature type="region of interest" description="Disordered" evidence="3">
    <location>
        <begin position="309"/>
        <end position="331"/>
    </location>
</feature>
<feature type="glycosylation site" description="N-linked (GlcNAc...) asparagine" evidence="1">
    <location>
        <position position="221"/>
    </location>
</feature>
<feature type="disulfide bond" evidence="2">
    <location>
        <begin position="29"/>
        <end position="56"/>
    </location>
</feature>
<feature type="disulfide bond" evidence="1">
    <location>
        <begin position="342"/>
        <end position="425"/>
    </location>
</feature>
<evidence type="ECO:0000250" key="1"/>
<evidence type="ECO:0000255" key="2">
    <source>
        <dbReference type="PROSITE-ProRule" id="PRU01258"/>
    </source>
</evidence>
<evidence type="ECO:0000256" key="3">
    <source>
        <dbReference type="SAM" id="MobiDB-lite"/>
    </source>
</evidence>
<evidence type="ECO:0000305" key="4"/>
<gene>
    <name type="primary">Idgf3</name>
</gene>
<sequence length="441" mass="49193">MTGSLWLSLALSLAVLAQFKVSAAPNLVCFYDSQGFQRQGLAQFSMTDMELALQFCTHLVYGYAGVNADNYEMQSINKRLDLEQRHLAQVSSLKERYPHIKFLLSVGGDADTNEGNQYIKLLESGQQGHRRFIESARDLVRRYNFDGLDLALQLPRNKPRKVHGDVGSAWKSFKKFFTGDFIVDTDSETHKGQVTALIKDLSAALKQNDLLLSLTVLPNVNSSWYYDAPSIAPSLDFINLGTFDFLTPQRNPEEADFSAPTYEAVGQNRLGHYNLNFQTEHWLLQRVPANKINIGIATYGRTWKMTKDSGDSGMPVVPSTQGPAPAGPQSKKEGLLNWAEICSLMPNPGNTNARGPSAPVKRVLDPTKRYGSYAFRAADENGDHGLWISYDDPDSASSKAMFARVRNLGGVALFDLTQDDFRGQCTNDRFPMLRAIKYRLL</sequence>
<dbReference type="EMBL" id="AF394734">
    <property type="protein sequence ID" value="AAM69666.1"/>
    <property type="molecule type" value="Genomic_DNA"/>
</dbReference>
<dbReference type="SMR" id="Q8MX31"/>
<dbReference type="CAZy" id="GH18">
    <property type="family name" value="Glycoside Hydrolase Family 18"/>
</dbReference>
<dbReference type="GlyCosmos" id="Q8MX31">
    <property type="glycosylation" value="1 site, No reported glycans"/>
</dbReference>
<dbReference type="eggNOG" id="KOG2806">
    <property type="taxonomic scope" value="Eukaryota"/>
</dbReference>
<dbReference type="OrthoDB" id="76388at2759"/>
<dbReference type="GO" id="GO:0005576">
    <property type="term" value="C:extracellular region"/>
    <property type="evidence" value="ECO:0007669"/>
    <property type="project" value="UniProtKB-SubCell"/>
</dbReference>
<dbReference type="GO" id="GO:0008061">
    <property type="term" value="F:chitin binding"/>
    <property type="evidence" value="ECO:0007669"/>
    <property type="project" value="InterPro"/>
</dbReference>
<dbReference type="GO" id="GO:0004568">
    <property type="term" value="F:chitinase activity"/>
    <property type="evidence" value="ECO:0007669"/>
    <property type="project" value="TreeGrafter"/>
</dbReference>
<dbReference type="GO" id="GO:0008084">
    <property type="term" value="F:imaginal disc growth factor receptor binding"/>
    <property type="evidence" value="ECO:0000250"/>
    <property type="project" value="UniProtKB"/>
</dbReference>
<dbReference type="GO" id="GO:0005975">
    <property type="term" value="P:carbohydrate metabolic process"/>
    <property type="evidence" value="ECO:0007669"/>
    <property type="project" value="InterPro"/>
</dbReference>
<dbReference type="GO" id="GO:0006032">
    <property type="term" value="P:chitin catabolic process"/>
    <property type="evidence" value="ECO:0007669"/>
    <property type="project" value="TreeGrafter"/>
</dbReference>
<dbReference type="GO" id="GO:0007444">
    <property type="term" value="P:imaginal disc development"/>
    <property type="evidence" value="ECO:0000250"/>
    <property type="project" value="UniProtKB"/>
</dbReference>
<dbReference type="CDD" id="cd02873">
    <property type="entry name" value="GH18_IDGF"/>
    <property type="match status" value="1"/>
</dbReference>
<dbReference type="FunFam" id="3.10.50.10:FF:000007">
    <property type="entry name" value="chitinase-like protein Idgf4"/>
    <property type="match status" value="1"/>
</dbReference>
<dbReference type="FunFam" id="3.20.20.80:FF:000071">
    <property type="entry name" value="Imaginal disc growth factor"/>
    <property type="match status" value="1"/>
</dbReference>
<dbReference type="Gene3D" id="3.10.50.10">
    <property type="match status" value="1"/>
</dbReference>
<dbReference type="Gene3D" id="3.20.20.80">
    <property type="entry name" value="Glycosidases"/>
    <property type="match status" value="1"/>
</dbReference>
<dbReference type="InterPro" id="IPR011583">
    <property type="entry name" value="Chitinase_II/V-like_cat"/>
</dbReference>
<dbReference type="InterPro" id="IPR029070">
    <property type="entry name" value="Chitinase_insertion_sf"/>
</dbReference>
<dbReference type="InterPro" id="IPR001223">
    <property type="entry name" value="Glyco_hydro18_cat"/>
</dbReference>
<dbReference type="InterPro" id="IPR017853">
    <property type="entry name" value="Glycoside_hydrolase_SF"/>
</dbReference>
<dbReference type="InterPro" id="IPR050314">
    <property type="entry name" value="Glycosyl_Hydrlase_18"/>
</dbReference>
<dbReference type="InterPro" id="IPR015520">
    <property type="entry name" value="IDGF"/>
</dbReference>
<dbReference type="PANTHER" id="PTHR11177">
    <property type="entry name" value="CHITINASE"/>
    <property type="match status" value="1"/>
</dbReference>
<dbReference type="PANTHER" id="PTHR11177:SF235">
    <property type="entry name" value="CHITINASE-LIKE PROTEIN IDGF1-RELATED"/>
    <property type="match status" value="1"/>
</dbReference>
<dbReference type="Pfam" id="PF00704">
    <property type="entry name" value="Glyco_hydro_18"/>
    <property type="match status" value="1"/>
</dbReference>
<dbReference type="SMART" id="SM00636">
    <property type="entry name" value="Glyco_18"/>
    <property type="match status" value="1"/>
</dbReference>
<dbReference type="SUPFAM" id="SSF51445">
    <property type="entry name" value="(Trans)glycosidases"/>
    <property type="match status" value="1"/>
</dbReference>
<dbReference type="SUPFAM" id="SSF54556">
    <property type="entry name" value="Chitinase insertion domain"/>
    <property type="match status" value="1"/>
</dbReference>
<dbReference type="PROSITE" id="PS51910">
    <property type="entry name" value="GH18_2"/>
    <property type="match status" value="1"/>
</dbReference>
<name>IDGF3_DROYA</name>
<proteinExistence type="inferred from homology"/>
<organism>
    <name type="scientific">Drosophila yakuba</name>
    <name type="common">Fruit fly</name>
    <dbReference type="NCBI Taxonomy" id="7245"/>
    <lineage>
        <taxon>Eukaryota</taxon>
        <taxon>Metazoa</taxon>
        <taxon>Ecdysozoa</taxon>
        <taxon>Arthropoda</taxon>
        <taxon>Hexapoda</taxon>
        <taxon>Insecta</taxon>
        <taxon>Pterygota</taxon>
        <taxon>Neoptera</taxon>
        <taxon>Endopterygota</taxon>
        <taxon>Diptera</taxon>
        <taxon>Brachycera</taxon>
        <taxon>Muscomorpha</taxon>
        <taxon>Ephydroidea</taxon>
        <taxon>Drosophilidae</taxon>
        <taxon>Drosophila</taxon>
        <taxon>Sophophora</taxon>
    </lineage>
</organism>
<keyword id="KW-0217">Developmental protein</keyword>
<keyword id="KW-1015">Disulfide bond</keyword>
<keyword id="KW-0325">Glycoprotein</keyword>
<keyword id="KW-0964">Secreted</keyword>
<keyword id="KW-0732">Signal</keyword>
<reference key="1">
    <citation type="journal article" date="2002" name="Genetics">
        <title>Polymorphism patterns in two tightly linked developmental genes, Idgf1 and Idgf3, of Drosophila melanogaster.</title>
        <authorList>
            <person name="Zurovcova M."/>
            <person name="Ayala F.J."/>
        </authorList>
    </citation>
    <scope>NUCLEOTIDE SEQUENCE [GENOMIC DNA]</scope>
    <source>
        <strain>#14021-0261.0</strain>
    </source>
</reference>
<accession>Q8MX31</accession>
<comment type="function">
    <text evidence="1">Cooperates with insulin-like peptides to stimulate the proliferation, polarization and motility of imaginal disk cells. May act by stabilizing the binding of insulin-like peptides to its receptor through a simultaneous interaction with both molecules to form a multiprotein signaling complex (By similarity).</text>
</comment>
<comment type="subcellular location">
    <subcellularLocation>
        <location evidence="1">Secreted</location>
    </subcellularLocation>
    <text evidence="1">Secreted in hemolymph. It is probably transported to target tissues via hemolymph.</text>
</comment>
<comment type="PTM">
    <text evidence="1">Glycosylated.</text>
</comment>
<comment type="miscellaneous">
    <text>Lacks the typical Glu active site in position 153 that is replaced by a Gln residue, preventing the hydrolase activity. Its precise function remains unclear.</text>
</comment>
<comment type="similarity">
    <text evidence="4">Belongs to the glycosyl hydrolase 18 family. IDGF subfamily.</text>
</comment>